<reference key="1">
    <citation type="journal article" date="2003" name="Genome Res.">
        <title>Tropheryma whipplei twist: a human pathogenic Actinobacteria with a reduced genome.</title>
        <authorList>
            <person name="Raoult D."/>
            <person name="Ogata H."/>
            <person name="Audic S."/>
            <person name="Robert C."/>
            <person name="Suhre K."/>
            <person name="Drancourt M."/>
            <person name="Claverie J.-M."/>
        </authorList>
    </citation>
    <scope>NUCLEOTIDE SEQUENCE [LARGE SCALE GENOMIC DNA]</scope>
    <source>
        <strain>Twist</strain>
    </source>
</reference>
<organism>
    <name type="scientific">Tropheryma whipplei (strain Twist)</name>
    <name type="common">Whipple's bacillus</name>
    <dbReference type="NCBI Taxonomy" id="203267"/>
    <lineage>
        <taxon>Bacteria</taxon>
        <taxon>Bacillati</taxon>
        <taxon>Actinomycetota</taxon>
        <taxon>Actinomycetes</taxon>
        <taxon>Micrococcales</taxon>
        <taxon>Tropherymataceae</taxon>
        <taxon>Tropheryma</taxon>
    </lineage>
</organism>
<accession>Q83G07</accession>
<proteinExistence type="inferred from homology"/>
<name>IF1_TROWT</name>
<comment type="function">
    <text evidence="1">One of the essential components for the initiation of protein synthesis. Stabilizes the binding of IF-2 and IF-3 on the 30S subunit to which N-formylmethionyl-tRNA(fMet) subsequently binds. Helps modulate mRNA selection, yielding the 30S pre-initiation complex (PIC). Upon addition of the 50S ribosomal subunit IF-1, IF-2 and IF-3 are released leaving the mature 70S translation initiation complex.</text>
</comment>
<comment type="subunit">
    <text evidence="1">Component of the 30S ribosomal translation pre-initiation complex which assembles on the 30S ribosome in the order IF-2 and IF-3, IF-1 and N-formylmethionyl-tRNA(fMet); mRNA recruitment can occur at any time during PIC assembly.</text>
</comment>
<comment type="subcellular location">
    <subcellularLocation>
        <location evidence="1">Cytoplasm</location>
    </subcellularLocation>
</comment>
<comment type="similarity">
    <text evidence="1">Belongs to the IF-1 family.</text>
</comment>
<gene>
    <name evidence="1" type="primary">infA</name>
    <name type="ordered locus">TWT_532</name>
</gene>
<sequence length="73" mass="8376">MAKKDGVIELEGSVLEALPNATFRVELSNGHKVLAHISGRMRQHYIRILPEDRVVVELSPYDLARGRIVYRYK</sequence>
<dbReference type="EMBL" id="AE014184">
    <property type="protein sequence ID" value="AAO44629.1"/>
    <property type="molecule type" value="Genomic_DNA"/>
</dbReference>
<dbReference type="RefSeq" id="WP_011096186.1">
    <property type="nucleotide sequence ID" value="NC_004572.3"/>
</dbReference>
<dbReference type="SMR" id="Q83G07"/>
<dbReference type="STRING" id="203267.TWT_532"/>
<dbReference type="GeneID" id="67388005"/>
<dbReference type="KEGG" id="twh:TWT_532"/>
<dbReference type="eggNOG" id="COG0361">
    <property type="taxonomic scope" value="Bacteria"/>
</dbReference>
<dbReference type="HOGENOM" id="CLU_151267_1_0_11"/>
<dbReference type="OrthoDB" id="9803250at2"/>
<dbReference type="Proteomes" id="UP000002200">
    <property type="component" value="Chromosome"/>
</dbReference>
<dbReference type="GO" id="GO:0005829">
    <property type="term" value="C:cytosol"/>
    <property type="evidence" value="ECO:0007669"/>
    <property type="project" value="TreeGrafter"/>
</dbReference>
<dbReference type="GO" id="GO:0043022">
    <property type="term" value="F:ribosome binding"/>
    <property type="evidence" value="ECO:0007669"/>
    <property type="project" value="UniProtKB-UniRule"/>
</dbReference>
<dbReference type="GO" id="GO:0019843">
    <property type="term" value="F:rRNA binding"/>
    <property type="evidence" value="ECO:0007669"/>
    <property type="project" value="UniProtKB-UniRule"/>
</dbReference>
<dbReference type="GO" id="GO:0003743">
    <property type="term" value="F:translation initiation factor activity"/>
    <property type="evidence" value="ECO:0007669"/>
    <property type="project" value="UniProtKB-UniRule"/>
</dbReference>
<dbReference type="CDD" id="cd04451">
    <property type="entry name" value="S1_IF1"/>
    <property type="match status" value="1"/>
</dbReference>
<dbReference type="FunFam" id="2.40.50.140:FF:000002">
    <property type="entry name" value="Translation initiation factor IF-1"/>
    <property type="match status" value="1"/>
</dbReference>
<dbReference type="Gene3D" id="2.40.50.140">
    <property type="entry name" value="Nucleic acid-binding proteins"/>
    <property type="match status" value="1"/>
</dbReference>
<dbReference type="HAMAP" id="MF_00075">
    <property type="entry name" value="IF_1"/>
    <property type="match status" value="1"/>
</dbReference>
<dbReference type="InterPro" id="IPR012340">
    <property type="entry name" value="NA-bd_OB-fold"/>
</dbReference>
<dbReference type="InterPro" id="IPR006196">
    <property type="entry name" value="RNA-binding_domain_S1_IF1"/>
</dbReference>
<dbReference type="InterPro" id="IPR004368">
    <property type="entry name" value="TIF_IF1"/>
</dbReference>
<dbReference type="NCBIfam" id="TIGR00008">
    <property type="entry name" value="infA"/>
    <property type="match status" value="1"/>
</dbReference>
<dbReference type="PANTHER" id="PTHR33370">
    <property type="entry name" value="TRANSLATION INITIATION FACTOR IF-1, CHLOROPLASTIC"/>
    <property type="match status" value="1"/>
</dbReference>
<dbReference type="PANTHER" id="PTHR33370:SF1">
    <property type="entry name" value="TRANSLATION INITIATION FACTOR IF-1, CHLOROPLASTIC"/>
    <property type="match status" value="1"/>
</dbReference>
<dbReference type="Pfam" id="PF01176">
    <property type="entry name" value="eIF-1a"/>
    <property type="match status" value="1"/>
</dbReference>
<dbReference type="SUPFAM" id="SSF50249">
    <property type="entry name" value="Nucleic acid-binding proteins"/>
    <property type="match status" value="1"/>
</dbReference>
<dbReference type="PROSITE" id="PS50832">
    <property type="entry name" value="S1_IF1_TYPE"/>
    <property type="match status" value="1"/>
</dbReference>
<evidence type="ECO:0000255" key="1">
    <source>
        <dbReference type="HAMAP-Rule" id="MF_00075"/>
    </source>
</evidence>
<protein>
    <recommendedName>
        <fullName evidence="1">Translation initiation factor IF-1</fullName>
    </recommendedName>
</protein>
<feature type="chain" id="PRO_0000095899" description="Translation initiation factor IF-1">
    <location>
        <begin position="1"/>
        <end position="73"/>
    </location>
</feature>
<feature type="domain" description="S1-like" evidence="1">
    <location>
        <begin position="1"/>
        <end position="73"/>
    </location>
</feature>
<keyword id="KW-0963">Cytoplasm</keyword>
<keyword id="KW-0396">Initiation factor</keyword>
<keyword id="KW-0648">Protein biosynthesis</keyword>
<keyword id="KW-1185">Reference proteome</keyword>
<keyword id="KW-0694">RNA-binding</keyword>
<keyword id="KW-0699">rRNA-binding</keyword>